<gene>
    <name evidence="1" type="primary">rpsD</name>
    <name type="ordered locus">BAbS19_I07930</name>
</gene>
<dbReference type="EMBL" id="CP000887">
    <property type="protein sequence ID" value="ACD72314.1"/>
    <property type="molecule type" value="Genomic_DNA"/>
</dbReference>
<dbReference type="RefSeq" id="WP_002963962.1">
    <property type="nucleotide sequence ID" value="NC_010742.1"/>
</dbReference>
<dbReference type="SMR" id="B2S567"/>
<dbReference type="GeneID" id="93016787"/>
<dbReference type="KEGG" id="bmc:BAbS19_I07930"/>
<dbReference type="HOGENOM" id="CLU_092403_0_0_5"/>
<dbReference type="Proteomes" id="UP000002565">
    <property type="component" value="Chromosome 1"/>
</dbReference>
<dbReference type="GO" id="GO:0015935">
    <property type="term" value="C:small ribosomal subunit"/>
    <property type="evidence" value="ECO:0007669"/>
    <property type="project" value="InterPro"/>
</dbReference>
<dbReference type="GO" id="GO:0019843">
    <property type="term" value="F:rRNA binding"/>
    <property type="evidence" value="ECO:0007669"/>
    <property type="project" value="UniProtKB-UniRule"/>
</dbReference>
<dbReference type="GO" id="GO:0003735">
    <property type="term" value="F:structural constituent of ribosome"/>
    <property type="evidence" value="ECO:0007669"/>
    <property type="project" value="InterPro"/>
</dbReference>
<dbReference type="GO" id="GO:0042274">
    <property type="term" value="P:ribosomal small subunit biogenesis"/>
    <property type="evidence" value="ECO:0007669"/>
    <property type="project" value="TreeGrafter"/>
</dbReference>
<dbReference type="GO" id="GO:0006412">
    <property type="term" value="P:translation"/>
    <property type="evidence" value="ECO:0007669"/>
    <property type="project" value="UniProtKB-UniRule"/>
</dbReference>
<dbReference type="CDD" id="cd00165">
    <property type="entry name" value="S4"/>
    <property type="match status" value="1"/>
</dbReference>
<dbReference type="FunFam" id="3.10.290.10:FF:000001">
    <property type="entry name" value="30S ribosomal protein S4"/>
    <property type="match status" value="1"/>
</dbReference>
<dbReference type="Gene3D" id="1.10.1050.10">
    <property type="entry name" value="Ribosomal Protein S4 Delta 41, Chain A, domain 1"/>
    <property type="match status" value="1"/>
</dbReference>
<dbReference type="Gene3D" id="3.10.290.10">
    <property type="entry name" value="RNA-binding S4 domain"/>
    <property type="match status" value="1"/>
</dbReference>
<dbReference type="HAMAP" id="MF_01306_B">
    <property type="entry name" value="Ribosomal_uS4_B"/>
    <property type="match status" value="1"/>
</dbReference>
<dbReference type="InterPro" id="IPR022801">
    <property type="entry name" value="Ribosomal_uS4"/>
</dbReference>
<dbReference type="InterPro" id="IPR005709">
    <property type="entry name" value="Ribosomal_uS4_bac-type"/>
</dbReference>
<dbReference type="InterPro" id="IPR018079">
    <property type="entry name" value="Ribosomal_uS4_CS"/>
</dbReference>
<dbReference type="InterPro" id="IPR001912">
    <property type="entry name" value="Ribosomal_uS4_N"/>
</dbReference>
<dbReference type="InterPro" id="IPR002942">
    <property type="entry name" value="S4_RNA-bd"/>
</dbReference>
<dbReference type="InterPro" id="IPR036986">
    <property type="entry name" value="S4_RNA-bd_sf"/>
</dbReference>
<dbReference type="NCBIfam" id="NF003717">
    <property type="entry name" value="PRK05327.1"/>
    <property type="match status" value="1"/>
</dbReference>
<dbReference type="NCBIfam" id="TIGR01017">
    <property type="entry name" value="rpsD_bact"/>
    <property type="match status" value="1"/>
</dbReference>
<dbReference type="PANTHER" id="PTHR11831">
    <property type="entry name" value="30S 40S RIBOSOMAL PROTEIN"/>
    <property type="match status" value="1"/>
</dbReference>
<dbReference type="PANTHER" id="PTHR11831:SF4">
    <property type="entry name" value="SMALL RIBOSOMAL SUBUNIT PROTEIN US4M"/>
    <property type="match status" value="1"/>
</dbReference>
<dbReference type="Pfam" id="PF00163">
    <property type="entry name" value="Ribosomal_S4"/>
    <property type="match status" value="1"/>
</dbReference>
<dbReference type="Pfam" id="PF01479">
    <property type="entry name" value="S4"/>
    <property type="match status" value="1"/>
</dbReference>
<dbReference type="SMART" id="SM01390">
    <property type="entry name" value="Ribosomal_S4"/>
    <property type="match status" value="1"/>
</dbReference>
<dbReference type="SMART" id="SM00363">
    <property type="entry name" value="S4"/>
    <property type="match status" value="1"/>
</dbReference>
<dbReference type="SUPFAM" id="SSF55174">
    <property type="entry name" value="Alpha-L RNA-binding motif"/>
    <property type="match status" value="1"/>
</dbReference>
<dbReference type="PROSITE" id="PS00632">
    <property type="entry name" value="RIBOSOMAL_S4"/>
    <property type="match status" value="1"/>
</dbReference>
<dbReference type="PROSITE" id="PS50889">
    <property type="entry name" value="S4"/>
    <property type="match status" value="1"/>
</dbReference>
<name>RS4_BRUA1</name>
<sequence length="205" mass="23566">MSKRESAKHKIDRRLGENIWGRPKSPVNRREYGPGQHGQRRKGKLSDFGVQLRAKQKLKGFYGDISEKQFRKTYEEAARRKGDTGENLIGLLESRLDAVVYRAKFVPTIFAARQFINHGHVNVNGRRVNIQSYRLKVGDVVEVREKSKQLAIVLEAVQLAERDVPDYIDVDHNKMVATYNRVPGLSDVPYAVQMEPNLVVEFYSR</sequence>
<reference key="1">
    <citation type="journal article" date="2008" name="PLoS ONE">
        <title>Genome sequence of Brucella abortus vaccine strain S19 compared to virulent strains yields candidate virulence genes.</title>
        <authorList>
            <person name="Crasta O.R."/>
            <person name="Folkerts O."/>
            <person name="Fei Z."/>
            <person name="Mane S.P."/>
            <person name="Evans C."/>
            <person name="Martino-Catt S."/>
            <person name="Bricker B."/>
            <person name="Yu G."/>
            <person name="Du L."/>
            <person name="Sobral B.W."/>
        </authorList>
    </citation>
    <scope>NUCLEOTIDE SEQUENCE [LARGE SCALE GENOMIC DNA]</scope>
    <source>
        <strain>S19</strain>
    </source>
</reference>
<comment type="function">
    <text evidence="1">One of the primary rRNA binding proteins, it binds directly to 16S rRNA where it nucleates assembly of the body of the 30S subunit.</text>
</comment>
<comment type="function">
    <text evidence="1">With S5 and S12 plays an important role in translational accuracy.</text>
</comment>
<comment type="subunit">
    <text evidence="1">Part of the 30S ribosomal subunit. Contacts protein S5. The interaction surface between S4 and S5 is involved in control of translational fidelity.</text>
</comment>
<comment type="similarity">
    <text evidence="1">Belongs to the universal ribosomal protein uS4 family.</text>
</comment>
<protein>
    <recommendedName>
        <fullName evidence="1">Small ribosomal subunit protein uS4</fullName>
    </recommendedName>
    <alternativeName>
        <fullName evidence="3">30S ribosomal protein S4</fullName>
    </alternativeName>
</protein>
<keyword id="KW-0687">Ribonucleoprotein</keyword>
<keyword id="KW-0689">Ribosomal protein</keyword>
<keyword id="KW-0694">RNA-binding</keyword>
<keyword id="KW-0699">rRNA-binding</keyword>
<evidence type="ECO:0000255" key="1">
    <source>
        <dbReference type="HAMAP-Rule" id="MF_01306"/>
    </source>
</evidence>
<evidence type="ECO:0000256" key="2">
    <source>
        <dbReference type="SAM" id="MobiDB-lite"/>
    </source>
</evidence>
<evidence type="ECO:0000305" key="3"/>
<proteinExistence type="inferred from homology"/>
<feature type="chain" id="PRO_1000140695" description="Small ribosomal subunit protein uS4">
    <location>
        <begin position="1"/>
        <end position="205"/>
    </location>
</feature>
<feature type="domain" description="S4 RNA-binding" evidence="1">
    <location>
        <begin position="94"/>
        <end position="157"/>
    </location>
</feature>
<feature type="region of interest" description="Disordered" evidence="2">
    <location>
        <begin position="1"/>
        <end position="46"/>
    </location>
</feature>
<feature type="compositionally biased region" description="Basic and acidic residues" evidence="2">
    <location>
        <begin position="1"/>
        <end position="16"/>
    </location>
</feature>
<accession>B2S567</accession>
<organism>
    <name type="scientific">Brucella abortus (strain S19)</name>
    <dbReference type="NCBI Taxonomy" id="430066"/>
    <lineage>
        <taxon>Bacteria</taxon>
        <taxon>Pseudomonadati</taxon>
        <taxon>Pseudomonadota</taxon>
        <taxon>Alphaproteobacteria</taxon>
        <taxon>Hyphomicrobiales</taxon>
        <taxon>Brucellaceae</taxon>
        <taxon>Brucella/Ochrobactrum group</taxon>
        <taxon>Brucella</taxon>
    </lineage>
</organism>